<proteinExistence type="inferred from homology"/>
<sequence>MGQKINPIGFRLGINRTWDSRWYADTAEYGKLLHEDLKIRAYLIKELKQAGIAKVVIERPHKKCRVTIHSARPGLIIGKKGADIEKLRKKLSEMTNSETHLNIVEVRKPEIDATLVAQSIAQQLERRVAFRRAMKRAVQSAMRLGAEGIKITCGGRLGGAEIARTEWYREGRVPLHTLRADIDYGTAEAETAFGICGIKVWIFKGEILEHDPMASERRGLEGDAQGPASRERGDRPDRRRENA</sequence>
<feature type="chain" id="PRO_0000130057" description="Small ribosomal subunit protein uS3">
    <location>
        <begin position="1"/>
        <end position="243"/>
    </location>
</feature>
<feature type="domain" description="KH type-2" evidence="1">
    <location>
        <begin position="39"/>
        <end position="107"/>
    </location>
</feature>
<feature type="region of interest" description="Disordered" evidence="2">
    <location>
        <begin position="214"/>
        <end position="243"/>
    </location>
</feature>
<feature type="compositionally biased region" description="Basic and acidic residues" evidence="2">
    <location>
        <begin position="229"/>
        <end position="243"/>
    </location>
</feature>
<organism>
    <name type="scientific">Agrobacterium fabrum (strain C58 / ATCC 33970)</name>
    <name type="common">Agrobacterium tumefaciens (strain C58)</name>
    <dbReference type="NCBI Taxonomy" id="176299"/>
    <lineage>
        <taxon>Bacteria</taxon>
        <taxon>Pseudomonadati</taxon>
        <taxon>Pseudomonadota</taxon>
        <taxon>Alphaproteobacteria</taxon>
        <taxon>Hyphomicrobiales</taxon>
        <taxon>Rhizobiaceae</taxon>
        <taxon>Rhizobium/Agrobacterium group</taxon>
        <taxon>Agrobacterium</taxon>
        <taxon>Agrobacterium tumefaciens complex</taxon>
    </lineage>
</organism>
<dbReference type="EMBL" id="AE007869">
    <property type="protein sequence ID" value="AAK87702.1"/>
    <property type="molecule type" value="Genomic_DNA"/>
</dbReference>
<dbReference type="PIR" id="AB2815">
    <property type="entry name" value="AB2815"/>
</dbReference>
<dbReference type="PIR" id="E97593">
    <property type="entry name" value="E97593"/>
</dbReference>
<dbReference type="RefSeq" id="NP_354917.1">
    <property type="nucleotide sequence ID" value="NC_003062.2"/>
</dbReference>
<dbReference type="RefSeq" id="WP_003495188.1">
    <property type="nucleotide sequence ID" value="NC_003062.2"/>
</dbReference>
<dbReference type="SMR" id="Q8UE24"/>
<dbReference type="STRING" id="176299.Atu1940"/>
<dbReference type="EnsemblBacteria" id="AAK87702">
    <property type="protein sequence ID" value="AAK87702"/>
    <property type="gene ID" value="Atu1940"/>
</dbReference>
<dbReference type="GeneID" id="1133978"/>
<dbReference type="KEGG" id="atu:Atu1940"/>
<dbReference type="PATRIC" id="fig|176299.10.peg.1952"/>
<dbReference type="eggNOG" id="COG0092">
    <property type="taxonomic scope" value="Bacteria"/>
</dbReference>
<dbReference type="HOGENOM" id="CLU_058591_0_2_5"/>
<dbReference type="OrthoDB" id="9806396at2"/>
<dbReference type="PhylomeDB" id="Q8UE24"/>
<dbReference type="BioCyc" id="AGRO:ATU1940-MONOMER"/>
<dbReference type="PRO" id="PR:Q8UE24"/>
<dbReference type="Proteomes" id="UP000000813">
    <property type="component" value="Chromosome circular"/>
</dbReference>
<dbReference type="GO" id="GO:0022627">
    <property type="term" value="C:cytosolic small ribosomal subunit"/>
    <property type="evidence" value="ECO:0007669"/>
    <property type="project" value="TreeGrafter"/>
</dbReference>
<dbReference type="GO" id="GO:0003729">
    <property type="term" value="F:mRNA binding"/>
    <property type="evidence" value="ECO:0007669"/>
    <property type="project" value="UniProtKB-UniRule"/>
</dbReference>
<dbReference type="GO" id="GO:0019843">
    <property type="term" value="F:rRNA binding"/>
    <property type="evidence" value="ECO:0007669"/>
    <property type="project" value="UniProtKB-UniRule"/>
</dbReference>
<dbReference type="GO" id="GO:0003735">
    <property type="term" value="F:structural constituent of ribosome"/>
    <property type="evidence" value="ECO:0007669"/>
    <property type="project" value="InterPro"/>
</dbReference>
<dbReference type="GO" id="GO:0006412">
    <property type="term" value="P:translation"/>
    <property type="evidence" value="ECO:0007669"/>
    <property type="project" value="UniProtKB-UniRule"/>
</dbReference>
<dbReference type="CDD" id="cd02412">
    <property type="entry name" value="KH-II_30S_S3"/>
    <property type="match status" value="1"/>
</dbReference>
<dbReference type="FunFam" id="3.30.1140.32:FF:000001">
    <property type="entry name" value="30S ribosomal protein S3"/>
    <property type="match status" value="1"/>
</dbReference>
<dbReference type="FunFam" id="3.30.300.20:FF:000001">
    <property type="entry name" value="30S ribosomal protein S3"/>
    <property type="match status" value="1"/>
</dbReference>
<dbReference type="Gene3D" id="3.30.300.20">
    <property type="match status" value="1"/>
</dbReference>
<dbReference type="Gene3D" id="3.30.1140.32">
    <property type="entry name" value="Ribosomal protein S3, C-terminal domain"/>
    <property type="match status" value="1"/>
</dbReference>
<dbReference type="HAMAP" id="MF_01309_B">
    <property type="entry name" value="Ribosomal_uS3_B"/>
    <property type="match status" value="1"/>
</dbReference>
<dbReference type="InterPro" id="IPR004087">
    <property type="entry name" value="KH_dom"/>
</dbReference>
<dbReference type="InterPro" id="IPR015946">
    <property type="entry name" value="KH_dom-like_a/b"/>
</dbReference>
<dbReference type="InterPro" id="IPR004044">
    <property type="entry name" value="KH_dom_type_2"/>
</dbReference>
<dbReference type="InterPro" id="IPR009019">
    <property type="entry name" value="KH_sf_prok-type"/>
</dbReference>
<dbReference type="InterPro" id="IPR036419">
    <property type="entry name" value="Ribosomal_S3_C_sf"/>
</dbReference>
<dbReference type="InterPro" id="IPR005704">
    <property type="entry name" value="Ribosomal_uS3_bac-typ"/>
</dbReference>
<dbReference type="InterPro" id="IPR001351">
    <property type="entry name" value="Ribosomal_uS3_C"/>
</dbReference>
<dbReference type="InterPro" id="IPR018280">
    <property type="entry name" value="Ribosomal_uS3_CS"/>
</dbReference>
<dbReference type="NCBIfam" id="TIGR01009">
    <property type="entry name" value="rpsC_bact"/>
    <property type="match status" value="1"/>
</dbReference>
<dbReference type="PANTHER" id="PTHR11760">
    <property type="entry name" value="30S/40S RIBOSOMAL PROTEIN S3"/>
    <property type="match status" value="1"/>
</dbReference>
<dbReference type="PANTHER" id="PTHR11760:SF19">
    <property type="entry name" value="SMALL RIBOSOMAL SUBUNIT PROTEIN US3C"/>
    <property type="match status" value="1"/>
</dbReference>
<dbReference type="Pfam" id="PF07650">
    <property type="entry name" value="KH_2"/>
    <property type="match status" value="1"/>
</dbReference>
<dbReference type="Pfam" id="PF00189">
    <property type="entry name" value="Ribosomal_S3_C"/>
    <property type="match status" value="1"/>
</dbReference>
<dbReference type="SMART" id="SM00322">
    <property type="entry name" value="KH"/>
    <property type="match status" value="1"/>
</dbReference>
<dbReference type="SUPFAM" id="SSF54814">
    <property type="entry name" value="Prokaryotic type KH domain (KH-domain type II)"/>
    <property type="match status" value="1"/>
</dbReference>
<dbReference type="SUPFAM" id="SSF54821">
    <property type="entry name" value="Ribosomal protein S3 C-terminal domain"/>
    <property type="match status" value="1"/>
</dbReference>
<dbReference type="PROSITE" id="PS50823">
    <property type="entry name" value="KH_TYPE_2"/>
    <property type="match status" value="1"/>
</dbReference>
<dbReference type="PROSITE" id="PS00548">
    <property type="entry name" value="RIBOSOMAL_S3"/>
    <property type="match status" value="1"/>
</dbReference>
<evidence type="ECO:0000255" key="1">
    <source>
        <dbReference type="HAMAP-Rule" id="MF_01309"/>
    </source>
</evidence>
<evidence type="ECO:0000256" key="2">
    <source>
        <dbReference type="SAM" id="MobiDB-lite"/>
    </source>
</evidence>
<evidence type="ECO:0000305" key="3"/>
<gene>
    <name evidence="1" type="primary">rpsC</name>
    <name type="ordered locus">Atu1940</name>
    <name type="ORF">AGR_C_3546</name>
</gene>
<protein>
    <recommendedName>
        <fullName evidence="1">Small ribosomal subunit protein uS3</fullName>
    </recommendedName>
    <alternativeName>
        <fullName evidence="3">30S ribosomal protein S3</fullName>
    </alternativeName>
</protein>
<keyword id="KW-1185">Reference proteome</keyword>
<keyword id="KW-0687">Ribonucleoprotein</keyword>
<keyword id="KW-0689">Ribosomal protein</keyword>
<keyword id="KW-0694">RNA-binding</keyword>
<keyword id="KW-0699">rRNA-binding</keyword>
<reference key="1">
    <citation type="journal article" date="2001" name="Science">
        <title>The genome of the natural genetic engineer Agrobacterium tumefaciens C58.</title>
        <authorList>
            <person name="Wood D.W."/>
            <person name="Setubal J.C."/>
            <person name="Kaul R."/>
            <person name="Monks D.E."/>
            <person name="Kitajima J.P."/>
            <person name="Okura V.K."/>
            <person name="Zhou Y."/>
            <person name="Chen L."/>
            <person name="Wood G.E."/>
            <person name="Almeida N.F. Jr."/>
            <person name="Woo L."/>
            <person name="Chen Y."/>
            <person name="Paulsen I.T."/>
            <person name="Eisen J.A."/>
            <person name="Karp P.D."/>
            <person name="Bovee D. Sr."/>
            <person name="Chapman P."/>
            <person name="Clendenning J."/>
            <person name="Deatherage G."/>
            <person name="Gillet W."/>
            <person name="Grant C."/>
            <person name="Kutyavin T."/>
            <person name="Levy R."/>
            <person name="Li M.-J."/>
            <person name="McClelland E."/>
            <person name="Palmieri A."/>
            <person name="Raymond C."/>
            <person name="Rouse G."/>
            <person name="Saenphimmachak C."/>
            <person name="Wu Z."/>
            <person name="Romero P."/>
            <person name="Gordon D."/>
            <person name="Zhang S."/>
            <person name="Yoo H."/>
            <person name="Tao Y."/>
            <person name="Biddle P."/>
            <person name="Jung M."/>
            <person name="Krespan W."/>
            <person name="Perry M."/>
            <person name="Gordon-Kamm B."/>
            <person name="Liao L."/>
            <person name="Kim S."/>
            <person name="Hendrick C."/>
            <person name="Zhao Z.-Y."/>
            <person name="Dolan M."/>
            <person name="Chumley F."/>
            <person name="Tingey S.V."/>
            <person name="Tomb J.-F."/>
            <person name="Gordon M.P."/>
            <person name="Olson M.V."/>
            <person name="Nester E.W."/>
        </authorList>
    </citation>
    <scope>NUCLEOTIDE SEQUENCE [LARGE SCALE GENOMIC DNA]</scope>
    <source>
        <strain>C58 / ATCC 33970</strain>
    </source>
</reference>
<reference key="2">
    <citation type="journal article" date="2001" name="Science">
        <title>Genome sequence of the plant pathogen and biotechnology agent Agrobacterium tumefaciens C58.</title>
        <authorList>
            <person name="Goodner B."/>
            <person name="Hinkle G."/>
            <person name="Gattung S."/>
            <person name="Miller N."/>
            <person name="Blanchard M."/>
            <person name="Qurollo B."/>
            <person name="Goldman B.S."/>
            <person name="Cao Y."/>
            <person name="Askenazi M."/>
            <person name="Halling C."/>
            <person name="Mullin L."/>
            <person name="Houmiel K."/>
            <person name="Gordon J."/>
            <person name="Vaudin M."/>
            <person name="Iartchouk O."/>
            <person name="Epp A."/>
            <person name="Liu F."/>
            <person name="Wollam C."/>
            <person name="Allinger M."/>
            <person name="Doughty D."/>
            <person name="Scott C."/>
            <person name="Lappas C."/>
            <person name="Markelz B."/>
            <person name="Flanagan C."/>
            <person name="Crowell C."/>
            <person name="Gurson J."/>
            <person name="Lomo C."/>
            <person name="Sear C."/>
            <person name="Strub G."/>
            <person name="Cielo C."/>
            <person name="Slater S."/>
        </authorList>
    </citation>
    <scope>NUCLEOTIDE SEQUENCE [LARGE SCALE GENOMIC DNA]</scope>
    <source>
        <strain>C58 / ATCC 33970</strain>
    </source>
</reference>
<comment type="function">
    <text evidence="1">Binds the lower part of the 30S subunit head. Binds mRNA in the 70S ribosome, positioning it for translation.</text>
</comment>
<comment type="subunit">
    <text evidence="1">Part of the 30S ribosomal subunit. Forms a tight complex with proteins S10 and S14.</text>
</comment>
<comment type="similarity">
    <text evidence="1">Belongs to the universal ribosomal protein uS3 family.</text>
</comment>
<accession>Q8UE24</accession>
<name>RS3_AGRFC</name>